<dbReference type="EC" id="2.3.2.34"/>
<dbReference type="EMBL" id="CR382130">
    <property type="protein sequence ID" value="CAG80740.1"/>
    <property type="molecule type" value="Genomic_DNA"/>
</dbReference>
<dbReference type="RefSeq" id="XP_502552.1">
    <property type="nucleotide sequence ID" value="XM_502552.1"/>
</dbReference>
<dbReference type="SMR" id="Q6C9W0"/>
<dbReference type="FunCoup" id="Q6C9W0">
    <property type="interactions" value="843"/>
</dbReference>
<dbReference type="STRING" id="284591.Q6C9W0"/>
<dbReference type="EnsemblFungi" id="CAG80740">
    <property type="protein sequence ID" value="CAG80740"/>
    <property type="gene ID" value="YALI0_D07890g"/>
</dbReference>
<dbReference type="KEGG" id="yli:2910945"/>
<dbReference type="VEuPathDB" id="FungiDB:YALI0_D07890g"/>
<dbReference type="HOGENOM" id="CLU_030988_6_0_1"/>
<dbReference type="InParanoid" id="Q6C9W0"/>
<dbReference type="OMA" id="CQVDFPD"/>
<dbReference type="OrthoDB" id="115479at4891"/>
<dbReference type="UniPathway" id="UPA00885"/>
<dbReference type="Proteomes" id="UP000001300">
    <property type="component" value="Chromosome D"/>
</dbReference>
<dbReference type="GO" id="GO:0005829">
    <property type="term" value="C:cytosol"/>
    <property type="evidence" value="ECO:0000318"/>
    <property type="project" value="GO_Central"/>
</dbReference>
<dbReference type="GO" id="GO:0005634">
    <property type="term" value="C:nucleus"/>
    <property type="evidence" value="ECO:0000318"/>
    <property type="project" value="GO_Central"/>
</dbReference>
<dbReference type="GO" id="GO:0005524">
    <property type="term" value="F:ATP binding"/>
    <property type="evidence" value="ECO:0007669"/>
    <property type="project" value="UniProtKB-KW"/>
</dbReference>
<dbReference type="GO" id="GO:0061654">
    <property type="term" value="F:NEDD8 conjugating enzyme activity"/>
    <property type="evidence" value="ECO:0007669"/>
    <property type="project" value="UniProtKB-EC"/>
</dbReference>
<dbReference type="GO" id="GO:0019788">
    <property type="term" value="F:NEDD8 transferase activity"/>
    <property type="evidence" value="ECO:0000318"/>
    <property type="project" value="GO_Central"/>
</dbReference>
<dbReference type="GO" id="GO:0045116">
    <property type="term" value="P:protein neddylation"/>
    <property type="evidence" value="ECO:0000318"/>
    <property type="project" value="GO_Central"/>
</dbReference>
<dbReference type="CDD" id="cd23794">
    <property type="entry name" value="UBCc_UBE2F_UBE2M"/>
    <property type="match status" value="1"/>
</dbReference>
<dbReference type="FunFam" id="3.10.110.10:FF:000005">
    <property type="entry name" value="NEDD8-conjugating enzyme Ubc12"/>
    <property type="match status" value="1"/>
</dbReference>
<dbReference type="Gene3D" id="3.10.110.10">
    <property type="entry name" value="Ubiquitin Conjugating Enzyme"/>
    <property type="match status" value="1"/>
</dbReference>
<dbReference type="InterPro" id="IPR050113">
    <property type="entry name" value="Ub_conjugating_enzyme"/>
</dbReference>
<dbReference type="InterPro" id="IPR000608">
    <property type="entry name" value="UBQ-conjugat_E2_core"/>
</dbReference>
<dbReference type="InterPro" id="IPR023313">
    <property type="entry name" value="UBQ-conjugating_AS"/>
</dbReference>
<dbReference type="InterPro" id="IPR016135">
    <property type="entry name" value="UBQ-conjugating_enzyme/RWD"/>
</dbReference>
<dbReference type="PANTHER" id="PTHR24067">
    <property type="entry name" value="UBIQUITIN-CONJUGATING ENZYME E2"/>
    <property type="match status" value="1"/>
</dbReference>
<dbReference type="Pfam" id="PF00179">
    <property type="entry name" value="UQ_con"/>
    <property type="match status" value="1"/>
</dbReference>
<dbReference type="SMART" id="SM00212">
    <property type="entry name" value="UBCc"/>
    <property type="match status" value="1"/>
</dbReference>
<dbReference type="SUPFAM" id="SSF54495">
    <property type="entry name" value="UBC-like"/>
    <property type="match status" value="1"/>
</dbReference>
<dbReference type="PROSITE" id="PS00183">
    <property type="entry name" value="UBC_1"/>
    <property type="match status" value="1"/>
</dbReference>
<dbReference type="PROSITE" id="PS50127">
    <property type="entry name" value="UBC_2"/>
    <property type="match status" value="1"/>
</dbReference>
<sequence>MLKIWSMKEKQAAEGGSAKKKVTAAQLRVQKDLSELSLPSTMKTHFPSAEDIMNFELTVRPDEGFYQGGEFRFSFYVNPNFPHEPPKVKCLQKVYHPNIDLEGNVCLNILREDWKPVLSLNAVMIGLQYLFLEPNASDPLNKDAAHQMTANREEFKRNVKHSMAGGSVAGERFDCVLIK</sequence>
<keyword id="KW-0067">ATP-binding</keyword>
<keyword id="KW-0547">Nucleotide-binding</keyword>
<keyword id="KW-1185">Reference proteome</keyword>
<keyword id="KW-0808">Transferase</keyword>
<keyword id="KW-0833">Ubl conjugation pathway</keyword>
<gene>
    <name type="primary">UBC12</name>
    <name type="ordered locus">YALI0D07890g</name>
</gene>
<name>UBC12_YARLI</name>
<organism>
    <name type="scientific">Yarrowia lipolytica (strain CLIB 122 / E 150)</name>
    <name type="common">Yeast</name>
    <name type="synonym">Candida lipolytica</name>
    <dbReference type="NCBI Taxonomy" id="284591"/>
    <lineage>
        <taxon>Eukaryota</taxon>
        <taxon>Fungi</taxon>
        <taxon>Dikarya</taxon>
        <taxon>Ascomycota</taxon>
        <taxon>Saccharomycotina</taxon>
        <taxon>Dipodascomycetes</taxon>
        <taxon>Dipodascales</taxon>
        <taxon>Dipodascales incertae sedis</taxon>
        <taxon>Yarrowia</taxon>
    </lineage>
</organism>
<protein>
    <recommendedName>
        <fullName>NEDD8-conjugating enzyme UBC12</fullName>
        <ecNumber>2.3.2.34</ecNumber>
    </recommendedName>
    <alternativeName>
        <fullName>RUB1-conjugating enzyme</fullName>
    </alternativeName>
    <alternativeName>
        <fullName>Ubiquitin carrier protein 12</fullName>
    </alternativeName>
</protein>
<comment type="function">
    <text evidence="1">Accepts the ubiquitin-like protein NEDD8/RUB1 from the UBA3-ULA1 E1 complex and catalyzes its covalent attachment to other proteins.</text>
</comment>
<comment type="catalytic activity">
    <reaction>
        <text>[E1 NEDD8-activating enzyme]-S-[NEDD8 protein]-yl-L-cysteine + [E2 NEDD8-conjugating enzyme]-L-cysteine = [E1 NEDD8-activating enzyme]-L-cysteine + [E2 NEDD8-conjugating enzyme]-S-[NEDD8-protein]-yl-L-cysteine.</text>
        <dbReference type="EC" id="2.3.2.34"/>
    </reaction>
</comment>
<comment type="pathway">
    <text>Protein modification; protein neddylation.</text>
</comment>
<comment type="similarity">
    <text evidence="2">Belongs to the ubiquitin-conjugating enzyme family. UBC12 subfamily.</text>
</comment>
<accession>Q6C9W0</accession>
<reference key="1">
    <citation type="journal article" date="2004" name="Nature">
        <title>Genome evolution in yeasts.</title>
        <authorList>
            <person name="Dujon B."/>
            <person name="Sherman D."/>
            <person name="Fischer G."/>
            <person name="Durrens P."/>
            <person name="Casaregola S."/>
            <person name="Lafontaine I."/>
            <person name="de Montigny J."/>
            <person name="Marck C."/>
            <person name="Neuveglise C."/>
            <person name="Talla E."/>
            <person name="Goffard N."/>
            <person name="Frangeul L."/>
            <person name="Aigle M."/>
            <person name="Anthouard V."/>
            <person name="Babour A."/>
            <person name="Barbe V."/>
            <person name="Barnay S."/>
            <person name="Blanchin S."/>
            <person name="Beckerich J.-M."/>
            <person name="Beyne E."/>
            <person name="Bleykasten C."/>
            <person name="Boisrame A."/>
            <person name="Boyer J."/>
            <person name="Cattolico L."/>
            <person name="Confanioleri F."/>
            <person name="de Daruvar A."/>
            <person name="Despons L."/>
            <person name="Fabre E."/>
            <person name="Fairhead C."/>
            <person name="Ferry-Dumazet H."/>
            <person name="Groppi A."/>
            <person name="Hantraye F."/>
            <person name="Hennequin C."/>
            <person name="Jauniaux N."/>
            <person name="Joyet P."/>
            <person name="Kachouri R."/>
            <person name="Kerrest A."/>
            <person name="Koszul R."/>
            <person name="Lemaire M."/>
            <person name="Lesur I."/>
            <person name="Ma L."/>
            <person name="Muller H."/>
            <person name="Nicaud J.-M."/>
            <person name="Nikolski M."/>
            <person name="Oztas S."/>
            <person name="Ozier-Kalogeropoulos O."/>
            <person name="Pellenz S."/>
            <person name="Potier S."/>
            <person name="Richard G.-F."/>
            <person name="Straub M.-L."/>
            <person name="Suleau A."/>
            <person name="Swennen D."/>
            <person name="Tekaia F."/>
            <person name="Wesolowski-Louvel M."/>
            <person name="Westhof E."/>
            <person name="Wirth B."/>
            <person name="Zeniou-Meyer M."/>
            <person name="Zivanovic Y."/>
            <person name="Bolotin-Fukuhara M."/>
            <person name="Thierry A."/>
            <person name="Bouchier C."/>
            <person name="Caudron B."/>
            <person name="Scarpelli C."/>
            <person name="Gaillardin C."/>
            <person name="Weissenbach J."/>
            <person name="Wincker P."/>
            <person name="Souciet J.-L."/>
        </authorList>
    </citation>
    <scope>NUCLEOTIDE SEQUENCE [LARGE SCALE GENOMIC DNA]</scope>
    <source>
        <strain>CLIB 122 / E 150</strain>
    </source>
</reference>
<proteinExistence type="inferred from homology"/>
<evidence type="ECO:0000250" key="1"/>
<evidence type="ECO:0000255" key="2">
    <source>
        <dbReference type="PROSITE-ProRule" id="PRU00388"/>
    </source>
</evidence>
<evidence type="ECO:0000255" key="3">
    <source>
        <dbReference type="PROSITE-ProRule" id="PRU10133"/>
    </source>
</evidence>
<feature type="chain" id="PRO_0000082500" description="NEDD8-conjugating enzyme UBC12">
    <location>
        <begin position="1"/>
        <end position="179"/>
    </location>
</feature>
<feature type="domain" description="UBC core" evidence="2">
    <location>
        <begin position="24"/>
        <end position="168"/>
    </location>
</feature>
<feature type="active site" description="Glycyl thioester intermediate" evidence="2 3">
    <location>
        <position position="106"/>
    </location>
</feature>